<dbReference type="EMBL" id="CP000425">
    <property type="protein sequence ID" value="ABJ72493.1"/>
    <property type="molecule type" value="Genomic_DNA"/>
</dbReference>
<dbReference type="RefSeq" id="WP_011675838.1">
    <property type="nucleotide sequence ID" value="NC_008527.1"/>
</dbReference>
<dbReference type="SMR" id="Q02ZX9"/>
<dbReference type="GeneID" id="61109160"/>
<dbReference type="KEGG" id="llc:LACR_0945"/>
<dbReference type="HOGENOM" id="CLU_103507_2_1_9"/>
<dbReference type="Proteomes" id="UP000000240">
    <property type="component" value="Chromosome"/>
</dbReference>
<dbReference type="GO" id="GO:0022625">
    <property type="term" value="C:cytosolic large ribosomal subunit"/>
    <property type="evidence" value="ECO:0007669"/>
    <property type="project" value="TreeGrafter"/>
</dbReference>
<dbReference type="GO" id="GO:0003735">
    <property type="term" value="F:structural constituent of ribosome"/>
    <property type="evidence" value="ECO:0007669"/>
    <property type="project" value="InterPro"/>
</dbReference>
<dbReference type="GO" id="GO:0006412">
    <property type="term" value="P:translation"/>
    <property type="evidence" value="ECO:0007669"/>
    <property type="project" value="UniProtKB-UniRule"/>
</dbReference>
<dbReference type="FunFam" id="2.30.30.790:FF:000001">
    <property type="entry name" value="50S ribosomal protein L19"/>
    <property type="match status" value="1"/>
</dbReference>
<dbReference type="Gene3D" id="2.30.30.790">
    <property type="match status" value="1"/>
</dbReference>
<dbReference type="HAMAP" id="MF_00402">
    <property type="entry name" value="Ribosomal_bL19"/>
    <property type="match status" value="1"/>
</dbReference>
<dbReference type="InterPro" id="IPR001857">
    <property type="entry name" value="Ribosomal_bL19"/>
</dbReference>
<dbReference type="InterPro" id="IPR018257">
    <property type="entry name" value="Ribosomal_bL19_CS"/>
</dbReference>
<dbReference type="InterPro" id="IPR038657">
    <property type="entry name" value="Ribosomal_bL19_sf"/>
</dbReference>
<dbReference type="InterPro" id="IPR008991">
    <property type="entry name" value="Translation_prot_SH3-like_sf"/>
</dbReference>
<dbReference type="NCBIfam" id="TIGR01024">
    <property type="entry name" value="rplS_bact"/>
    <property type="match status" value="1"/>
</dbReference>
<dbReference type="PANTHER" id="PTHR15680:SF9">
    <property type="entry name" value="LARGE RIBOSOMAL SUBUNIT PROTEIN BL19M"/>
    <property type="match status" value="1"/>
</dbReference>
<dbReference type="PANTHER" id="PTHR15680">
    <property type="entry name" value="RIBOSOMAL PROTEIN L19"/>
    <property type="match status" value="1"/>
</dbReference>
<dbReference type="Pfam" id="PF01245">
    <property type="entry name" value="Ribosomal_L19"/>
    <property type="match status" value="1"/>
</dbReference>
<dbReference type="PIRSF" id="PIRSF002191">
    <property type="entry name" value="Ribosomal_L19"/>
    <property type="match status" value="1"/>
</dbReference>
<dbReference type="PRINTS" id="PR00061">
    <property type="entry name" value="RIBOSOMALL19"/>
</dbReference>
<dbReference type="SUPFAM" id="SSF50104">
    <property type="entry name" value="Translation proteins SH3-like domain"/>
    <property type="match status" value="1"/>
</dbReference>
<dbReference type="PROSITE" id="PS01015">
    <property type="entry name" value="RIBOSOMAL_L19"/>
    <property type="match status" value="1"/>
</dbReference>
<feature type="chain" id="PRO_1000072248" description="Large ribosomal subunit protein bL19">
    <location>
        <begin position="1"/>
        <end position="114"/>
    </location>
</feature>
<keyword id="KW-0687">Ribonucleoprotein</keyword>
<keyword id="KW-0689">Ribosomal protein</keyword>
<comment type="function">
    <text evidence="1">This protein is located at the 30S-50S ribosomal subunit interface and may play a role in the structure and function of the aminoacyl-tRNA binding site.</text>
</comment>
<comment type="similarity">
    <text evidence="1">Belongs to the bacterial ribosomal protein bL19 family.</text>
</comment>
<sequence>MNLIESINAAQLRTDIPDFRPGDTVRVHAKVVEGTRERIQIFEGVVIARKNSGINETYTVRKISNGVGVERIFPVHTPRVEKIEVIRHGKVRRAKLYYLRALTGKKARIAERRR</sequence>
<reference key="1">
    <citation type="journal article" date="2006" name="Proc. Natl. Acad. Sci. U.S.A.">
        <title>Comparative genomics of the lactic acid bacteria.</title>
        <authorList>
            <person name="Makarova K.S."/>
            <person name="Slesarev A."/>
            <person name="Wolf Y.I."/>
            <person name="Sorokin A."/>
            <person name="Mirkin B."/>
            <person name="Koonin E.V."/>
            <person name="Pavlov A."/>
            <person name="Pavlova N."/>
            <person name="Karamychev V."/>
            <person name="Polouchine N."/>
            <person name="Shakhova V."/>
            <person name="Grigoriev I."/>
            <person name="Lou Y."/>
            <person name="Rohksar D."/>
            <person name="Lucas S."/>
            <person name="Huang K."/>
            <person name="Goodstein D.M."/>
            <person name="Hawkins T."/>
            <person name="Plengvidhya V."/>
            <person name="Welker D."/>
            <person name="Hughes J."/>
            <person name="Goh Y."/>
            <person name="Benson A."/>
            <person name="Baldwin K."/>
            <person name="Lee J.-H."/>
            <person name="Diaz-Muniz I."/>
            <person name="Dosti B."/>
            <person name="Smeianov V."/>
            <person name="Wechter W."/>
            <person name="Barabote R."/>
            <person name="Lorca G."/>
            <person name="Altermann E."/>
            <person name="Barrangou R."/>
            <person name="Ganesan B."/>
            <person name="Xie Y."/>
            <person name="Rawsthorne H."/>
            <person name="Tamir D."/>
            <person name="Parker C."/>
            <person name="Breidt F."/>
            <person name="Broadbent J.R."/>
            <person name="Hutkins R."/>
            <person name="O'Sullivan D."/>
            <person name="Steele J."/>
            <person name="Unlu G."/>
            <person name="Saier M.H. Jr."/>
            <person name="Klaenhammer T."/>
            <person name="Richardson P."/>
            <person name="Kozyavkin S."/>
            <person name="Weimer B.C."/>
            <person name="Mills D.A."/>
        </authorList>
    </citation>
    <scope>NUCLEOTIDE SEQUENCE [LARGE SCALE GENOMIC DNA]</scope>
    <source>
        <strain>SK11</strain>
    </source>
</reference>
<gene>
    <name evidence="1" type="primary">rplS</name>
    <name type="ordered locus">LACR_0945</name>
</gene>
<evidence type="ECO:0000255" key="1">
    <source>
        <dbReference type="HAMAP-Rule" id="MF_00402"/>
    </source>
</evidence>
<evidence type="ECO:0000305" key="2"/>
<name>RL19_LACLS</name>
<accession>Q02ZX9</accession>
<proteinExistence type="inferred from homology"/>
<organism>
    <name type="scientific">Lactococcus lactis subsp. cremoris (strain SK11)</name>
    <dbReference type="NCBI Taxonomy" id="272622"/>
    <lineage>
        <taxon>Bacteria</taxon>
        <taxon>Bacillati</taxon>
        <taxon>Bacillota</taxon>
        <taxon>Bacilli</taxon>
        <taxon>Lactobacillales</taxon>
        <taxon>Streptococcaceae</taxon>
        <taxon>Lactococcus</taxon>
        <taxon>Lactococcus cremoris subsp. cremoris</taxon>
    </lineage>
</organism>
<protein>
    <recommendedName>
        <fullName evidence="1">Large ribosomal subunit protein bL19</fullName>
    </recommendedName>
    <alternativeName>
        <fullName evidence="2">50S ribosomal protein L19</fullName>
    </alternativeName>
</protein>